<organism>
    <name type="scientific">Oryza sativa subsp. japonica</name>
    <name type="common">Rice</name>
    <dbReference type="NCBI Taxonomy" id="39947"/>
    <lineage>
        <taxon>Eukaryota</taxon>
        <taxon>Viridiplantae</taxon>
        <taxon>Streptophyta</taxon>
        <taxon>Embryophyta</taxon>
        <taxon>Tracheophyta</taxon>
        <taxon>Spermatophyta</taxon>
        <taxon>Magnoliopsida</taxon>
        <taxon>Liliopsida</taxon>
        <taxon>Poales</taxon>
        <taxon>Poaceae</taxon>
        <taxon>BOP clade</taxon>
        <taxon>Oryzoideae</taxon>
        <taxon>Oryzeae</taxon>
        <taxon>Oryzinae</taxon>
        <taxon>Oryza</taxon>
        <taxon>Oryza sativa</taxon>
    </lineage>
</organism>
<reference key="1">
    <citation type="journal article" date="2005" name="BMC Biol.">
        <title>The sequence of rice chromosomes 11 and 12, rich in disease resistance genes and recent gene duplications.</title>
        <authorList>
            <consortium name="The rice chromosomes 11 and 12 sequencing consortia"/>
        </authorList>
    </citation>
    <scope>NUCLEOTIDE SEQUENCE [LARGE SCALE GENOMIC DNA]</scope>
    <source>
        <strain>cv. Nipponbare</strain>
    </source>
</reference>
<reference key="2">
    <citation type="journal article" date="2005" name="Nature">
        <title>The map-based sequence of the rice genome.</title>
        <authorList>
            <consortium name="International rice genome sequencing project (IRGSP)"/>
        </authorList>
    </citation>
    <scope>NUCLEOTIDE SEQUENCE [LARGE SCALE GENOMIC DNA]</scope>
    <source>
        <strain>cv. Nipponbare</strain>
    </source>
</reference>
<reference key="3">
    <citation type="journal article" date="2008" name="Nucleic Acids Res.">
        <title>The rice annotation project database (RAP-DB): 2008 update.</title>
        <authorList>
            <consortium name="The rice annotation project (RAP)"/>
        </authorList>
    </citation>
    <scope>GENOME REANNOTATION</scope>
    <source>
        <strain>cv. Nipponbare</strain>
    </source>
</reference>
<reference key="4">
    <citation type="journal article" date="2013" name="Rice">
        <title>Improvement of the Oryza sativa Nipponbare reference genome using next generation sequence and optical map data.</title>
        <authorList>
            <person name="Kawahara Y."/>
            <person name="de la Bastide M."/>
            <person name="Hamilton J.P."/>
            <person name="Kanamori H."/>
            <person name="McCombie W.R."/>
            <person name="Ouyang S."/>
            <person name="Schwartz D.C."/>
            <person name="Tanaka T."/>
            <person name="Wu J."/>
            <person name="Zhou S."/>
            <person name="Childs K.L."/>
            <person name="Davidson R.M."/>
            <person name="Lin H."/>
            <person name="Quesada-Ocampo L."/>
            <person name="Vaillancourt B."/>
            <person name="Sakai H."/>
            <person name="Lee S.S."/>
            <person name="Kim J."/>
            <person name="Numa H."/>
            <person name="Itoh T."/>
            <person name="Buell C.R."/>
            <person name="Matsumoto T."/>
        </authorList>
    </citation>
    <scope>GENOME REANNOTATION</scope>
    <source>
        <strain>cv. Nipponbare</strain>
    </source>
</reference>
<reference key="5">
    <citation type="journal article" date="2005" name="PLoS Biol.">
        <title>The genomes of Oryza sativa: a history of duplications.</title>
        <authorList>
            <person name="Yu J."/>
            <person name="Wang J."/>
            <person name="Lin W."/>
            <person name="Li S."/>
            <person name="Li H."/>
            <person name="Zhou J."/>
            <person name="Ni P."/>
            <person name="Dong W."/>
            <person name="Hu S."/>
            <person name="Zeng C."/>
            <person name="Zhang J."/>
            <person name="Zhang Y."/>
            <person name="Li R."/>
            <person name="Xu Z."/>
            <person name="Li S."/>
            <person name="Li X."/>
            <person name="Zheng H."/>
            <person name="Cong L."/>
            <person name="Lin L."/>
            <person name="Yin J."/>
            <person name="Geng J."/>
            <person name="Li G."/>
            <person name="Shi J."/>
            <person name="Liu J."/>
            <person name="Lv H."/>
            <person name="Li J."/>
            <person name="Wang J."/>
            <person name="Deng Y."/>
            <person name="Ran L."/>
            <person name="Shi X."/>
            <person name="Wang X."/>
            <person name="Wu Q."/>
            <person name="Li C."/>
            <person name="Ren X."/>
            <person name="Wang J."/>
            <person name="Wang X."/>
            <person name="Li D."/>
            <person name="Liu D."/>
            <person name="Zhang X."/>
            <person name="Ji Z."/>
            <person name="Zhao W."/>
            <person name="Sun Y."/>
            <person name="Zhang Z."/>
            <person name="Bao J."/>
            <person name="Han Y."/>
            <person name="Dong L."/>
            <person name="Ji J."/>
            <person name="Chen P."/>
            <person name="Wu S."/>
            <person name="Liu J."/>
            <person name="Xiao Y."/>
            <person name="Bu D."/>
            <person name="Tan J."/>
            <person name="Yang L."/>
            <person name="Ye C."/>
            <person name="Zhang J."/>
            <person name="Xu J."/>
            <person name="Zhou Y."/>
            <person name="Yu Y."/>
            <person name="Zhang B."/>
            <person name="Zhuang S."/>
            <person name="Wei H."/>
            <person name="Liu B."/>
            <person name="Lei M."/>
            <person name="Yu H."/>
            <person name="Li Y."/>
            <person name="Xu H."/>
            <person name="Wei S."/>
            <person name="He X."/>
            <person name="Fang L."/>
            <person name="Zhang Z."/>
            <person name="Zhang Y."/>
            <person name="Huang X."/>
            <person name="Su Z."/>
            <person name="Tong W."/>
            <person name="Li J."/>
            <person name="Tong Z."/>
            <person name="Li S."/>
            <person name="Ye J."/>
            <person name="Wang L."/>
            <person name="Fang L."/>
            <person name="Lei T."/>
            <person name="Chen C.-S."/>
            <person name="Chen H.-C."/>
            <person name="Xu Z."/>
            <person name="Li H."/>
            <person name="Huang H."/>
            <person name="Zhang F."/>
            <person name="Xu H."/>
            <person name="Li N."/>
            <person name="Zhao C."/>
            <person name="Li S."/>
            <person name="Dong L."/>
            <person name="Huang Y."/>
            <person name="Li L."/>
            <person name="Xi Y."/>
            <person name="Qi Q."/>
            <person name="Li W."/>
            <person name="Zhang B."/>
            <person name="Hu W."/>
            <person name="Zhang Y."/>
            <person name="Tian X."/>
            <person name="Jiao Y."/>
            <person name="Liang X."/>
            <person name="Jin J."/>
            <person name="Gao L."/>
            <person name="Zheng W."/>
            <person name="Hao B."/>
            <person name="Liu S.-M."/>
            <person name="Wang W."/>
            <person name="Yuan L."/>
            <person name="Cao M."/>
            <person name="McDermott J."/>
            <person name="Samudrala R."/>
            <person name="Wang J."/>
            <person name="Wong G.K.-S."/>
            <person name="Yang H."/>
        </authorList>
    </citation>
    <scope>NUCLEOTIDE SEQUENCE [LARGE SCALE GENOMIC DNA]</scope>
    <source>
        <strain>cv. Nipponbare</strain>
    </source>
</reference>
<reference key="6">
    <citation type="journal article" date="2003" name="Science">
        <title>Collection, mapping, and annotation of over 28,000 cDNA clones from japonica rice.</title>
        <authorList>
            <consortium name="The rice full-length cDNA consortium"/>
        </authorList>
    </citation>
    <scope>NUCLEOTIDE SEQUENCE [LARGE SCALE MRNA]</scope>
    <source>
        <strain>cv. Nipponbare</strain>
    </source>
</reference>
<protein>
    <recommendedName>
        <fullName>Probable serine/threonine-protein kinase WNK8</fullName>
        <shortName>OsWNK8</shortName>
        <ecNumber>2.7.11.1</ecNumber>
    </recommendedName>
    <alternativeName>
        <fullName>Protein kinase with no lysine 8</fullName>
    </alternativeName>
</protein>
<accession>Q2QYL8</accession>
<accession>B7EDH7</accession>
<proteinExistence type="evidence at transcript level"/>
<gene>
    <name type="primary">WNK8</name>
    <name type="ordered locus">Os12g0114100</name>
    <name type="ordered locus">LOC_Os12g02250</name>
    <name type="ORF">OsJ_033639</name>
</gene>
<dbReference type="EC" id="2.7.11.1"/>
<dbReference type="EMBL" id="DP000011">
    <property type="protein sequence ID" value="ABA96277.1"/>
    <property type="molecule type" value="Genomic_DNA"/>
</dbReference>
<dbReference type="EMBL" id="AP008218">
    <property type="protein sequence ID" value="BAF29000.1"/>
    <property type="molecule type" value="Genomic_DNA"/>
</dbReference>
<dbReference type="EMBL" id="AP014968">
    <property type="protein sequence ID" value="BAT15588.1"/>
    <property type="molecule type" value="Genomic_DNA"/>
</dbReference>
<dbReference type="EMBL" id="CM000149">
    <property type="protein sequence ID" value="EAZ19430.1"/>
    <property type="molecule type" value="Genomic_DNA"/>
</dbReference>
<dbReference type="EMBL" id="AK067447">
    <property type="protein sequence ID" value="BAG90424.1"/>
    <property type="molecule type" value="mRNA"/>
</dbReference>
<dbReference type="EMBL" id="AK072172">
    <property type="status" value="NOT_ANNOTATED_CDS"/>
    <property type="molecule type" value="mRNA"/>
</dbReference>
<dbReference type="RefSeq" id="XP_015620020.1">
    <property type="nucleotide sequence ID" value="XM_015764534.1"/>
</dbReference>
<dbReference type="SMR" id="Q2QYL8"/>
<dbReference type="FunCoup" id="Q2QYL8">
    <property type="interactions" value="1440"/>
</dbReference>
<dbReference type="STRING" id="39947.Q2QYL8"/>
<dbReference type="PaxDb" id="39947-Q2QYL8"/>
<dbReference type="EnsemblPlants" id="Os12t0114100-01">
    <property type="protein sequence ID" value="Os12t0114100-01"/>
    <property type="gene ID" value="Os12g0114100"/>
</dbReference>
<dbReference type="EnsemblPlants" id="Os12t0114100-02">
    <property type="protein sequence ID" value="Os12t0114100-02"/>
    <property type="gene ID" value="Os12g0114100"/>
</dbReference>
<dbReference type="Gramene" id="Os12t0114100-01">
    <property type="protein sequence ID" value="Os12t0114100-01"/>
    <property type="gene ID" value="Os12g0114100"/>
</dbReference>
<dbReference type="Gramene" id="Os12t0114100-02">
    <property type="protein sequence ID" value="Os12t0114100-02"/>
    <property type="gene ID" value="Os12g0114100"/>
</dbReference>
<dbReference type="KEGG" id="dosa:Os12g0114100"/>
<dbReference type="eggNOG" id="KOG0584">
    <property type="taxonomic scope" value="Eukaryota"/>
</dbReference>
<dbReference type="HOGENOM" id="CLU_000288_142_1_1"/>
<dbReference type="InParanoid" id="Q2QYL8"/>
<dbReference type="OMA" id="AGWFQDY"/>
<dbReference type="OrthoDB" id="4062651at2759"/>
<dbReference type="Proteomes" id="UP000000763">
    <property type="component" value="Chromosome 12"/>
</dbReference>
<dbReference type="Proteomes" id="UP000007752">
    <property type="component" value="Chromosome 12"/>
</dbReference>
<dbReference type="Proteomes" id="UP000059680">
    <property type="component" value="Chromosome 12"/>
</dbReference>
<dbReference type="GO" id="GO:0005737">
    <property type="term" value="C:cytoplasm"/>
    <property type="evidence" value="ECO:0000318"/>
    <property type="project" value="GO_Central"/>
</dbReference>
<dbReference type="GO" id="GO:0005524">
    <property type="term" value="F:ATP binding"/>
    <property type="evidence" value="ECO:0007669"/>
    <property type="project" value="UniProtKB-KW"/>
</dbReference>
<dbReference type="GO" id="GO:0106310">
    <property type="term" value="F:protein serine kinase activity"/>
    <property type="evidence" value="ECO:0007669"/>
    <property type="project" value="RHEA"/>
</dbReference>
<dbReference type="GO" id="GO:0004674">
    <property type="term" value="F:protein serine/threonine kinase activity"/>
    <property type="evidence" value="ECO:0000318"/>
    <property type="project" value="GO_Central"/>
</dbReference>
<dbReference type="GO" id="GO:0035556">
    <property type="term" value="P:intracellular signal transduction"/>
    <property type="evidence" value="ECO:0000318"/>
    <property type="project" value="GO_Central"/>
</dbReference>
<dbReference type="FunFam" id="3.30.200.20:FF:000075">
    <property type="entry name" value="Probable serine/threonine-protein kinase WNK1"/>
    <property type="match status" value="1"/>
</dbReference>
<dbReference type="FunFam" id="1.10.510.10:FF:000046">
    <property type="entry name" value="probable serine/threonine-protein kinase WNK9"/>
    <property type="match status" value="1"/>
</dbReference>
<dbReference type="Gene3D" id="3.10.20.90">
    <property type="entry name" value="Phosphatidylinositol 3-kinase Catalytic Subunit, Chain A, domain 1"/>
    <property type="match status" value="1"/>
</dbReference>
<dbReference type="Gene3D" id="3.30.200.20">
    <property type="entry name" value="Phosphorylase Kinase, domain 1"/>
    <property type="match status" value="1"/>
</dbReference>
<dbReference type="Gene3D" id="1.10.510.10">
    <property type="entry name" value="Transferase(Phosphotransferase) domain 1"/>
    <property type="match status" value="1"/>
</dbReference>
<dbReference type="InterPro" id="IPR011009">
    <property type="entry name" value="Kinase-like_dom_sf"/>
</dbReference>
<dbReference type="InterPro" id="IPR000719">
    <property type="entry name" value="Prot_kinase_dom"/>
</dbReference>
<dbReference type="InterPro" id="IPR008271">
    <property type="entry name" value="Ser/Thr_kinase_AS"/>
</dbReference>
<dbReference type="InterPro" id="IPR050588">
    <property type="entry name" value="WNK_Ser-Thr_kinase"/>
</dbReference>
<dbReference type="PANTHER" id="PTHR13902">
    <property type="entry name" value="SERINE/THREONINE-PROTEIN KINASE WNK WITH NO LYSINE -RELATED"/>
    <property type="match status" value="1"/>
</dbReference>
<dbReference type="Pfam" id="PF00069">
    <property type="entry name" value="Pkinase"/>
    <property type="match status" value="1"/>
</dbReference>
<dbReference type="SMART" id="SM00220">
    <property type="entry name" value="S_TKc"/>
    <property type="match status" value="1"/>
</dbReference>
<dbReference type="SUPFAM" id="SSF56112">
    <property type="entry name" value="Protein kinase-like (PK-like)"/>
    <property type="match status" value="1"/>
</dbReference>
<dbReference type="PROSITE" id="PS50011">
    <property type="entry name" value="PROTEIN_KINASE_DOM"/>
    <property type="match status" value="1"/>
</dbReference>
<dbReference type="PROSITE" id="PS00108">
    <property type="entry name" value="PROTEIN_KINASE_ST"/>
    <property type="match status" value="1"/>
</dbReference>
<feature type="chain" id="PRO_0000351678" description="Probable serine/threonine-protein kinase WNK8">
    <location>
        <begin position="1"/>
        <end position="619"/>
    </location>
</feature>
<feature type="domain" description="Protein kinase" evidence="3">
    <location>
        <begin position="35"/>
        <end position="291"/>
    </location>
</feature>
<feature type="region of interest" description="Disordered" evidence="4">
    <location>
        <begin position="1"/>
        <end position="30"/>
    </location>
</feature>
<feature type="region of interest" description="Disordered" evidence="4">
    <location>
        <begin position="293"/>
        <end position="335"/>
    </location>
</feature>
<feature type="region of interest" description="Disordered" evidence="4">
    <location>
        <begin position="419"/>
        <end position="464"/>
    </location>
</feature>
<feature type="region of interest" description="Disordered" evidence="4">
    <location>
        <begin position="508"/>
        <end position="555"/>
    </location>
</feature>
<feature type="region of interest" description="Disordered" evidence="4">
    <location>
        <begin position="585"/>
        <end position="619"/>
    </location>
</feature>
<feature type="compositionally biased region" description="Basic and acidic residues" evidence="4">
    <location>
        <begin position="1"/>
        <end position="14"/>
    </location>
</feature>
<feature type="compositionally biased region" description="Acidic residues" evidence="4">
    <location>
        <begin position="419"/>
        <end position="428"/>
    </location>
</feature>
<feature type="compositionally biased region" description="Low complexity" evidence="4">
    <location>
        <begin position="439"/>
        <end position="448"/>
    </location>
</feature>
<feature type="compositionally biased region" description="Basic residues" evidence="4">
    <location>
        <begin position="602"/>
        <end position="619"/>
    </location>
</feature>
<feature type="active site" description="Proton acceptor" evidence="2">
    <location>
        <position position="180"/>
    </location>
</feature>
<feature type="binding site" evidence="1">
    <location>
        <begin position="115"/>
        <end position="118"/>
    </location>
    <ligand>
        <name>ATP</name>
        <dbReference type="ChEBI" id="CHEBI:30616"/>
    </ligand>
</feature>
<feature type="binding site" evidence="1">
    <location>
        <position position="163"/>
    </location>
    <ligand>
        <name>ATP</name>
        <dbReference type="ChEBI" id="CHEBI:30616"/>
    </ligand>
</feature>
<name>WNK8_ORYSJ</name>
<comment type="catalytic activity">
    <reaction>
        <text>L-seryl-[protein] + ATP = O-phospho-L-seryl-[protein] + ADP + H(+)</text>
        <dbReference type="Rhea" id="RHEA:17989"/>
        <dbReference type="Rhea" id="RHEA-COMP:9863"/>
        <dbReference type="Rhea" id="RHEA-COMP:11604"/>
        <dbReference type="ChEBI" id="CHEBI:15378"/>
        <dbReference type="ChEBI" id="CHEBI:29999"/>
        <dbReference type="ChEBI" id="CHEBI:30616"/>
        <dbReference type="ChEBI" id="CHEBI:83421"/>
        <dbReference type="ChEBI" id="CHEBI:456216"/>
        <dbReference type="EC" id="2.7.11.1"/>
    </reaction>
</comment>
<comment type="catalytic activity">
    <reaction>
        <text>L-threonyl-[protein] + ATP = O-phospho-L-threonyl-[protein] + ADP + H(+)</text>
        <dbReference type="Rhea" id="RHEA:46608"/>
        <dbReference type="Rhea" id="RHEA-COMP:11060"/>
        <dbReference type="Rhea" id="RHEA-COMP:11605"/>
        <dbReference type="ChEBI" id="CHEBI:15378"/>
        <dbReference type="ChEBI" id="CHEBI:30013"/>
        <dbReference type="ChEBI" id="CHEBI:30616"/>
        <dbReference type="ChEBI" id="CHEBI:61977"/>
        <dbReference type="ChEBI" id="CHEBI:456216"/>
        <dbReference type="EC" id="2.7.11.1"/>
    </reaction>
</comment>
<comment type="similarity">
    <text evidence="3">Belongs to the protein kinase superfamily. Ser/Thr protein kinase family. WNK subfamily.</text>
</comment>
<comment type="caution">
    <text evidence="1">Was named WNK/'with no lysine(K)' because key residues for catalysis, including the lysine involved in ATP binding, are either not conserved or differ compared to the residues described in other kinase family proteins.</text>
</comment>
<comment type="sequence caution" evidence="5">
    <conflict type="frameshift">
        <sequence resource="EMBL" id="AK072172"/>
    </conflict>
</comment>
<sequence length="619" mass="68517">MSGARRCGDRRSERSSVVGDNRNGYVETDPTGRYGRLSEVLGKGAMKTVYRGFDELRGVEVAWNQATISDVLRTPDALHRMYAEVSLLADLRHDAIIAFHASWVHPSRRTFNFITELFSSGTLRSYRLRYPRVSRRAVAAWARAILRGLAYLHSRGVIHRDLKCDNIFVNGHLGQVKIGDLGLAAVLRGCTSARSVIGTPEFMAPEMYDECYGVGVDVYSFGMCMLEMLTNEYPYSECDNPAQIYKKVTAGKLPDAFYLLTDADARRFIGRCLVDAAHRPSAEELLLDPFLSPPQNHDDHNTIAHATAPPPPLPLACSNSSEEQEEEEAPAAKTTGMAITGKLNKEHDTIFLKVQIGGGGNVRNIYFPFDVANDTAMEVATEMVKELDIADREPTEIAAMIEQEIVRLVPGYKQHEYSYADDDDDDDVNGQPNPFYYLSSSPTSSQGSLCGVGPTSSEGFPGPHGKVDWSRDYCYYPPSSVSVSDDDDSSTSSLSAAVSAISLQQQHCSASSSRLGPASASASEDGGGHAGRPRQREGEEERRRRRMSRNRSMVDMRSQLLHRTLVEELNKRLFFNTVGAVHDIGFRDPTTYGSSSSSSSSQHRRRSSSKVDHKHHYMF</sequence>
<keyword id="KW-0067">ATP-binding</keyword>
<keyword id="KW-0418">Kinase</keyword>
<keyword id="KW-0547">Nucleotide-binding</keyword>
<keyword id="KW-1185">Reference proteome</keyword>
<keyword id="KW-0723">Serine/threonine-protein kinase</keyword>
<keyword id="KW-0808">Transferase</keyword>
<evidence type="ECO:0000250" key="1">
    <source>
        <dbReference type="UniProtKB" id="Q9H4A3"/>
    </source>
</evidence>
<evidence type="ECO:0000250" key="2">
    <source>
        <dbReference type="UniProtKB" id="Q9JIH7"/>
    </source>
</evidence>
<evidence type="ECO:0000255" key="3">
    <source>
        <dbReference type="PROSITE-ProRule" id="PRU00159"/>
    </source>
</evidence>
<evidence type="ECO:0000256" key="4">
    <source>
        <dbReference type="SAM" id="MobiDB-lite"/>
    </source>
</evidence>
<evidence type="ECO:0000305" key="5"/>